<comment type="function">
    <text evidence="1">Binds to 23S rRNA. Forms part of two intersubunit bridges in the 70S ribosome.</text>
</comment>
<comment type="subunit">
    <text evidence="1">Part of the 50S ribosomal subunit. Forms a cluster with proteins L3 and L19. In the 70S ribosome, L14 and L19 interact and together make contacts with the 16S rRNA in bridges B5 and B8.</text>
</comment>
<comment type="similarity">
    <text evidence="1">Belongs to the universal ribosomal protein uL14 family.</text>
</comment>
<organism>
    <name type="scientific">Christiangramia forsetii (strain DSM 17595 / CGMCC 1.15422 / KT0803)</name>
    <name type="common">Gramella forsetii</name>
    <dbReference type="NCBI Taxonomy" id="411154"/>
    <lineage>
        <taxon>Bacteria</taxon>
        <taxon>Pseudomonadati</taxon>
        <taxon>Bacteroidota</taxon>
        <taxon>Flavobacteriia</taxon>
        <taxon>Flavobacteriales</taxon>
        <taxon>Flavobacteriaceae</taxon>
        <taxon>Christiangramia</taxon>
    </lineage>
</organism>
<dbReference type="EMBL" id="CU207366">
    <property type="protein sequence ID" value="CAL67783.1"/>
    <property type="molecule type" value="Genomic_DNA"/>
</dbReference>
<dbReference type="RefSeq" id="WP_011710686.1">
    <property type="nucleotide sequence ID" value="NC_008571.1"/>
</dbReference>
<dbReference type="SMR" id="A0M588"/>
<dbReference type="STRING" id="411154.GFO_2829"/>
<dbReference type="KEGG" id="gfo:GFO_2829"/>
<dbReference type="eggNOG" id="COG0093">
    <property type="taxonomic scope" value="Bacteria"/>
</dbReference>
<dbReference type="HOGENOM" id="CLU_095071_2_1_10"/>
<dbReference type="OrthoDB" id="9806379at2"/>
<dbReference type="Proteomes" id="UP000000755">
    <property type="component" value="Chromosome"/>
</dbReference>
<dbReference type="GO" id="GO:0022625">
    <property type="term" value="C:cytosolic large ribosomal subunit"/>
    <property type="evidence" value="ECO:0007669"/>
    <property type="project" value="TreeGrafter"/>
</dbReference>
<dbReference type="GO" id="GO:0070180">
    <property type="term" value="F:large ribosomal subunit rRNA binding"/>
    <property type="evidence" value="ECO:0007669"/>
    <property type="project" value="TreeGrafter"/>
</dbReference>
<dbReference type="GO" id="GO:0003735">
    <property type="term" value="F:structural constituent of ribosome"/>
    <property type="evidence" value="ECO:0007669"/>
    <property type="project" value="InterPro"/>
</dbReference>
<dbReference type="GO" id="GO:0006412">
    <property type="term" value="P:translation"/>
    <property type="evidence" value="ECO:0007669"/>
    <property type="project" value="UniProtKB-UniRule"/>
</dbReference>
<dbReference type="CDD" id="cd00337">
    <property type="entry name" value="Ribosomal_uL14"/>
    <property type="match status" value="1"/>
</dbReference>
<dbReference type="FunFam" id="2.40.150.20:FF:000001">
    <property type="entry name" value="50S ribosomal protein L14"/>
    <property type="match status" value="1"/>
</dbReference>
<dbReference type="Gene3D" id="2.40.150.20">
    <property type="entry name" value="Ribosomal protein L14"/>
    <property type="match status" value="1"/>
</dbReference>
<dbReference type="HAMAP" id="MF_01367">
    <property type="entry name" value="Ribosomal_uL14"/>
    <property type="match status" value="1"/>
</dbReference>
<dbReference type="InterPro" id="IPR000218">
    <property type="entry name" value="Ribosomal_uL14"/>
</dbReference>
<dbReference type="InterPro" id="IPR005745">
    <property type="entry name" value="Ribosomal_uL14_bac-type"/>
</dbReference>
<dbReference type="InterPro" id="IPR019972">
    <property type="entry name" value="Ribosomal_uL14_CS"/>
</dbReference>
<dbReference type="InterPro" id="IPR036853">
    <property type="entry name" value="Ribosomal_uL14_sf"/>
</dbReference>
<dbReference type="NCBIfam" id="TIGR01067">
    <property type="entry name" value="rplN_bact"/>
    <property type="match status" value="1"/>
</dbReference>
<dbReference type="PANTHER" id="PTHR11761">
    <property type="entry name" value="50S/60S RIBOSOMAL PROTEIN L14/L23"/>
    <property type="match status" value="1"/>
</dbReference>
<dbReference type="PANTHER" id="PTHR11761:SF3">
    <property type="entry name" value="LARGE RIBOSOMAL SUBUNIT PROTEIN UL14M"/>
    <property type="match status" value="1"/>
</dbReference>
<dbReference type="Pfam" id="PF00238">
    <property type="entry name" value="Ribosomal_L14"/>
    <property type="match status" value="1"/>
</dbReference>
<dbReference type="SMART" id="SM01374">
    <property type="entry name" value="Ribosomal_L14"/>
    <property type="match status" value="1"/>
</dbReference>
<dbReference type="SUPFAM" id="SSF50193">
    <property type="entry name" value="Ribosomal protein L14"/>
    <property type="match status" value="1"/>
</dbReference>
<dbReference type="PROSITE" id="PS00049">
    <property type="entry name" value="RIBOSOMAL_L14"/>
    <property type="match status" value="1"/>
</dbReference>
<sequence>MVQQESRLKVADNTGAKEVLAIRVLGGTKKRYASVGDKIVVSVKEATPNGSIKKGAVSTAVVVRTRKEVRRPDGSYIRFDDNACVLLGPQGEMRGTRVFGPVARELRDKQFMKIVSLAPEVL</sequence>
<evidence type="ECO:0000255" key="1">
    <source>
        <dbReference type="HAMAP-Rule" id="MF_01367"/>
    </source>
</evidence>
<evidence type="ECO:0000305" key="2"/>
<name>RL14_CHRFK</name>
<feature type="chain" id="PRO_1000055589" description="Large ribosomal subunit protein uL14">
    <location>
        <begin position="1"/>
        <end position="122"/>
    </location>
</feature>
<keyword id="KW-0687">Ribonucleoprotein</keyword>
<keyword id="KW-0689">Ribosomal protein</keyword>
<keyword id="KW-0694">RNA-binding</keyword>
<keyword id="KW-0699">rRNA-binding</keyword>
<accession>A0M588</accession>
<protein>
    <recommendedName>
        <fullName evidence="1">Large ribosomal subunit protein uL14</fullName>
    </recommendedName>
    <alternativeName>
        <fullName evidence="2">50S ribosomal protein L14</fullName>
    </alternativeName>
</protein>
<proteinExistence type="inferred from homology"/>
<gene>
    <name evidence="1" type="primary">rplN</name>
    <name type="ordered locus">GFO_2829</name>
</gene>
<reference key="1">
    <citation type="journal article" date="2006" name="Environ. Microbiol.">
        <title>Whole genome analysis of the marine Bacteroidetes'Gramella forsetii' reveals adaptations to degradation of polymeric organic matter.</title>
        <authorList>
            <person name="Bauer M."/>
            <person name="Kube M."/>
            <person name="Teeling H."/>
            <person name="Richter M."/>
            <person name="Lombardot T."/>
            <person name="Allers E."/>
            <person name="Wuerdemann C.A."/>
            <person name="Quast C."/>
            <person name="Kuhl H."/>
            <person name="Knaust F."/>
            <person name="Woebken D."/>
            <person name="Bischof K."/>
            <person name="Mussmann M."/>
            <person name="Choudhuri J.V."/>
            <person name="Meyer F."/>
            <person name="Reinhardt R."/>
            <person name="Amann R.I."/>
            <person name="Gloeckner F.O."/>
        </authorList>
    </citation>
    <scope>NUCLEOTIDE SEQUENCE [LARGE SCALE GENOMIC DNA]</scope>
    <source>
        <strain>DSM 17595 / CGMCC 1.15422 / KT0803</strain>
    </source>
</reference>